<name>INLPE_MYCTO</name>
<keyword id="KW-0223">Dioxygenase</keyword>
<keyword id="KW-0408">Iron</keyword>
<keyword id="KW-0479">Metal-binding</keyword>
<keyword id="KW-0560">Oxidoreductase</keyword>
<keyword id="KW-1185">Reference proteome</keyword>
<accession>P9WG82</accession>
<accession>L0T5I4</accession>
<accession>P67755</accession>
<accession>Q10893</accession>
<comment type="function">
    <text evidence="1 2">Involved in the biosynthesis of a unique class of isonitrile lipopeptides (INLPs) that seem to function as virulence factors in M.tuberculosis and to play a role in metal acquisition (By similarity). Catalyzes the conversion of (3R)-3-[(carboxymethyl)amino]fatty acids to (3R)-3-isocyanyl-fatty acids through an oxidative decarboxylation mechanism, thereby generating the isonitrile group of INLPs (By similarity).</text>
</comment>
<comment type="catalytic activity">
    <reaction evidence="1">
        <text>a (3R)-3-[(carboxymethyl)amino]fatty acid + 2 2-oxoglutarate + 2 O2 = a (3R)-3-isocyanyl-fatty acid + 2 succinate + 3 CO2 + 2 H2O</text>
        <dbReference type="Rhea" id="RHEA:74931"/>
        <dbReference type="ChEBI" id="CHEBI:15377"/>
        <dbReference type="ChEBI" id="CHEBI:15379"/>
        <dbReference type="ChEBI" id="CHEBI:16526"/>
        <dbReference type="ChEBI" id="CHEBI:16810"/>
        <dbReference type="ChEBI" id="CHEBI:30031"/>
        <dbReference type="ChEBI" id="CHEBI:193080"/>
        <dbReference type="ChEBI" id="CHEBI:193084"/>
        <dbReference type="EC" id="1.14.11.78"/>
    </reaction>
    <physiologicalReaction direction="left-to-right" evidence="1">
        <dbReference type="Rhea" id="RHEA:74932"/>
    </physiologicalReaction>
</comment>
<comment type="catalytic activity">
    <reaction evidence="1">
        <text>a (3R)-3-[(carboxymethyl)amino]fatty acid + 2-oxoglutarate + O2 = a (3R)-3-{[carboxy(hydroxy)methyl]amino}fatty acid + succinate + CO2</text>
        <dbReference type="Rhea" id="RHEA:74939"/>
        <dbReference type="ChEBI" id="CHEBI:15379"/>
        <dbReference type="ChEBI" id="CHEBI:16526"/>
        <dbReference type="ChEBI" id="CHEBI:16810"/>
        <dbReference type="ChEBI" id="CHEBI:30031"/>
        <dbReference type="ChEBI" id="CHEBI:193080"/>
        <dbReference type="ChEBI" id="CHEBI:193082"/>
    </reaction>
    <physiologicalReaction direction="left-to-right" evidence="1">
        <dbReference type="Rhea" id="RHEA:74940"/>
    </physiologicalReaction>
</comment>
<comment type="catalytic activity">
    <reaction evidence="1">
        <text>a (3R)-3-{[carboxy(hydroxy)methyl]amino}fatty acid + 2-oxoglutarate + O2 = a (3R)-3-isocyanyl-fatty acid + succinate + 2 CO2 + 2 H2O</text>
        <dbReference type="Rhea" id="RHEA:74943"/>
        <dbReference type="ChEBI" id="CHEBI:15377"/>
        <dbReference type="ChEBI" id="CHEBI:15379"/>
        <dbReference type="ChEBI" id="CHEBI:16526"/>
        <dbReference type="ChEBI" id="CHEBI:16810"/>
        <dbReference type="ChEBI" id="CHEBI:30031"/>
        <dbReference type="ChEBI" id="CHEBI:193082"/>
        <dbReference type="ChEBI" id="CHEBI:193084"/>
    </reaction>
    <physiologicalReaction direction="left-to-right" evidence="1">
        <dbReference type="Rhea" id="RHEA:74944"/>
    </physiologicalReaction>
</comment>
<comment type="cofactor">
    <cofactor evidence="1">
        <name>Fe(2+)</name>
        <dbReference type="ChEBI" id="CHEBI:29033"/>
    </cofactor>
</comment>
<comment type="miscellaneous">
    <text evidence="1">Isonitrile formation goes through two consecutive, but distinctive, 2-oxoglutarate-dpendent reactions catalyzed by this enzyme. In the first reaction, an Fe(IV)-oxo species is utilized to generate a (3R)-3-{[carboxy(hydroxy)methyl]amino}fatty acid. Then, its conversion into a (3R)-3-isocyanyl-fatty acid likely proceeds by decarboxylation-assisted desaturation.</text>
</comment>
<comment type="similarity">
    <text evidence="3">Belongs to the TfdA dioxygenase family.</text>
</comment>
<organism>
    <name type="scientific">Mycobacterium tuberculosis (strain CDC 1551 / Oshkosh)</name>
    <dbReference type="NCBI Taxonomy" id="83331"/>
    <lineage>
        <taxon>Bacteria</taxon>
        <taxon>Bacillati</taxon>
        <taxon>Actinomycetota</taxon>
        <taxon>Actinomycetes</taxon>
        <taxon>Mycobacteriales</taxon>
        <taxon>Mycobacteriaceae</taxon>
        <taxon>Mycobacterium</taxon>
        <taxon>Mycobacterium tuberculosis complex</taxon>
    </lineage>
</organism>
<evidence type="ECO:0000250" key="1">
    <source>
        <dbReference type="UniProtKB" id="A0A3B6UEU3"/>
    </source>
</evidence>
<evidence type="ECO:0000250" key="2">
    <source>
        <dbReference type="UniProtKB" id="P9WG83"/>
    </source>
</evidence>
<evidence type="ECO:0000305" key="3"/>
<reference key="1">
    <citation type="journal article" date="2002" name="J. Bacteriol.">
        <title>Whole-genome comparison of Mycobacterium tuberculosis clinical and laboratory strains.</title>
        <authorList>
            <person name="Fleischmann R.D."/>
            <person name="Alland D."/>
            <person name="Eisen J.A."/>
            <person name="Carpenter L."/>
            <person name="White O."/>
            <person name="Peterson J.D."/>
            <person name="DeBoy R.T."/>
            <person name="Dodson R.J."/>
            <person name="Gwinn M.L."/>
            <person name="Haft D.H."/>
            <person name="Hickey E.K."/>
            <person name="Kolonay J.F."/>
            <person name="Nelson W.C."/>
            <person name="Umayam L.A."/>
            <person name="Ermolaeva M.D."/>
            <person name="Salzberg S.L."/>
            <person name="Delcher A."/>
            <person name="Utterback T.R."/>
            <person name="Weidman J.F."/>
            <person name="Khouri H.M."/>
            <person name="Gill J."/>
            <person name="Mikula A."/>
            <person name="Bishai W."/>
            <person name="Jacobs W.R. Jr."/>
            <person name="Venter J.C."/>
            <person name="Fraser C.M."/>
        </authorList>
    </citation>
    <scope>NUCLEOTIDE SEQUENCE [LARGE SCALE GENOMIC DNA]</scope>
    <source>
        <strain>CDC 1551 / Oshkosh</strain>
    </source>
</reference>
<gene>
    <name type="ordered locus">MT0106</name>
</gene>
<feature type="chain" id="PRO_0000428407" description="(3R)-3-[(carboxymethyl)amino]fatty acid oxygenase/decarboxylase">
    <location>
        <begin position="1"/>
        <end position="289"/>
    </location>
</feature>
<feature type="binding site" evidence="1">
    <location>
        <position position="65"/>
    </location>
    <ligand>
        <name>a (3R)-3-[(carboxymethyl)amino]fatty acid</name>
        <dbReference type="ChEBI" id="CHEBI:193080"/>
    </ligand>
</feature>
<feature type="binding site" evidence="1">
    <location>
        <position position="70"/>
    </location>
    <ligand>
        <name>a (3R)-3-[(carboxymethyl)amino]fatty acid</name>
        <dbReference type="ChEBI" id="CHEBI:193080"/>
    </ligand>
</feature>
<feature type="binding site" evidence="1">
    <location>
        <position position="93"/>
    </location>
    <ligand>
        <name>a (3R)-3-[(carboxymethyl)amino]fatty acid</name>
        <dbReference type="ChEBI" id="CHEBI:193080"/>
    </ligand>
</feature>
<feature type="binding site" evidence="1">
    <location>
        <position position="97"/>
    </location>
    <ligand>
        <name>Fe(2+)</name>
        <dbReference type="ChEBI" id="CHEBI:29033"/>
    </ligand>
</feature>
<feature type="binding site" evidence="1">
    <location>
        <position position="99"/>
    </location>
    <ligand>
        <name>Fe(2+)</name>
        <dbReference type="ChEBI" id="CHEBI:29033"/>
    </ligand>
</feature>
<feature type="binding site" evidence="1">
    <location>
        <position position="100"/>
    </location>
    <ligand>
        <name>a (3R)-3-[(carboxymethyl)amino]fatty acid</name>
        <dbReference type="ChEBI" id="CHEBI:193080"/>
    </ligand>
</feature>
<feature type="binding site" evidence="1">
    <location>
        <position position="158"/>
    </location>
    <ligand>
        <name>a (3R)-3-[(carboxymethyl)amino]fatty acid</name>
        <dbReference type="ChEBI" id="CHEBI:193080"/>
    </ligand>
</feature>
<feature type="binding site" evidence="1">
    <location>
        <position position="260"/>
    </location>
    <ligand>
        <name>Fe(2+)</name>
        <dbReference type="ChEBI" id="CHEBI:29033"/>
    </ligand>
</feature>
<feature type="binding site" evidence="1">
    <location>
        <position position="264"/>
    </location>
    <ligand>
        <name>2-oxoglutarate</name>
        <dbReference type="ChEBI" id="CHEBI:16810"/>
    </ligand>
</feature>
<feature type="binding site" evidence="1">
    <location>
        <position position="275"/>
    </location>
    <ligand>
        <name>a (3R)-3-[(carboxymethyl)amino]fatty acid</name>
        <dbReference type="ChEBI" id="CHEBI:193080"/>
    </ligand>
</feature>
<sequence length="289" mass="32641">MTLKVKGEGLGAQVTGVDPKNLDDITTDEIRDIVYTNKLVVLKDVHPSPREFIKLGRIIGQIVPYYEPMYHHEDHPEIFVSSTEEGQGVPKTGAFWHIDYMFMPEPFAFSMVLPLAVPGHDRGTYFIDLARVWQSLPAAKRDPARGTVSTHDPRRHIKIRPSDVYRPIGEVWDEINRTTPPIKWPTVIRHPKTGQEILYICATGTTKIEDKDGNPVDPEVLQELMAATGQLDPEYQSPFIHTQHYQVGDIILWDNRVLMHRAKHGSAAGTLTTYRLTMLDGLKTPGYAA</sequence>
<dbReference type="EC" id="1.14.11.78" evidence="1"/>
<dbReference type="EMBL" id="AE000516">
    <property type="protein sequence ID" value="AAK44328.1"/>
    <property type="molecule type" value="Genomic_DNA"/>
</dbReference>
<dbReference type="PIR" id="A70751">
    <property type="entry name" value="A70751"/>
</dbReference>
<dbReference type="RefSeq" id="WP_003400786.1">
    <property type="nucleotide sequence ID" value="NZ_KK341227.1"/>
</dbReference>
<dbReference type="SMR" id="P9WG82"/>
<dbReference type="KEGG" id="mtc:MT0106"/>
<dbReference type="PATRIC" id="fig|83331.31.peg.111"/>
<dbReference type="HOGENOM" id="CLU_036005_2_0_11"/>
<dbReference type="Proteomes" id="UP000001020">
    <property type="component" value="Chromosome"/>
</dbReference>
<dbReference type="GO" id="GO:0051213">
    <property type="term" value="F:dioxygenase activity"/>
    <property type="evidence" value="ECO:0007669"/>
    <property type="project" value="UniProtKB-KW"/>
</dbReference>
<dbReference type="GO" id="GO:0046872">
    <property type="term" value="F:metal ion binding"/>
    <property type="evidence" value="ECO:0007669"/>
    <property type="project" value="UniProtKB-KW"/>
</dbReference>
<dbReference type="Gene3D" id="3.60.130.10">
    <property type="entry name" value="Clavaminate synthase-like"/>
    <property type="match status" value="1"/>
</dbReference>
<dbReference type="InterPro" id="IPR042098">
    <property type="entry name" value="TauD-like_sf"/>
</dbReference>
<dbReference type="InterPro" id="IPR003819">
    <property type="entry name" value="TauD/TfdA-like"/>
</dbReference>
<dbReference type="InterPro" id="IPR051178">
    <property type="entry name" value="TfdA_dioxygenase"/>
</dbReference>
<dbReference type="PANTHER" id="PTHR43779:SF3">
    <property type="entry name" value="(3R)-3-[(CARBOXYMETHYL)AMINO]FATTY ACID OXYGENASE_DECARBOXYLASE"/>
    <property type="match status" value="1"/>
</dbReference>
<dbReference type="PANTHER" id="PTHR43779">
    <property type="entry name" value="DIOXYGENASE RV0097-RELATED"/>
    <property type="match status" value="1"/>
</dbReference>
<dbReference type="Pfam" id="PF02668">
    <property type="entry name" value="TauD"/>
    <property type="match status" value="1"/>
</dbReference>
<dbReference type="SUPFAM" id="SSF51197">
    <property type="entry name" value="Clavaminate synthase-like"/>
    <property type="match status" value="1"/>
</dbReference>
<proteinExistence type="inferred from homology"/>
<protein>
    <recommendedName>
        <fullName>(3R)-3-[(carboxymethyl)amino]fatty acid oxygenase/decarboxylase</fullName>
        <ecNumber evidence="1">1.14.11.78</ecNumber>
    </recommendedName>
</protein>